<dbReference type="EMBL" id="AE017126">
    <property type="protein sequence ID" value="AAQ00837.1"/>
    <property type="molecule type" value="Genomic_DNA"/>
</dbReference>
<dbReference type="RefSeq" id="NP_876184.1">
    <property type="nucleotide sequence ID" value="NC_005042.1"/>
</dbReference>
<dbReference type="RefSeq" id="WP_011125942.1">
    <property type="nucleotide sequence ID" value="NC_005042.1"/>
</dbReference>
<dbReference type="SMR" id="Q7V9N6"/>
<dbReference type="STRING" id="167539.Pro_1793"/>
<dbReference type="EnsemblBacteria" id="AAQ00837">
    <property type="protein sequence ID" value="AAQ00837"/>
    <property type="gene ID" value="Pro_1793"/>
</dbReference>
<dbReference type="KEGG" id="pma:Pro_1793"/>
<dbReference type="PATRIC" id="fig|167539.5.peg.1894"/>
<dbReference type="eggNOG" id="COG0239">
    <property type="taxonomic scope" value="Bacteria"/>
</dbReference>
<dbReference type="HOGENOM" id="CLU_114342_2_1_3"/>
<dbReference type="OrthoDB" id="9815830at2"/>
<dbReference type="Proteomes" id="UP000001420">
    <property type="component" value="Chromosome"/>
</dbReference>
<dbReference type="GO" id="GO:0005886">
    <property type="term" value="C:plasma membrane"/>
    <property type="evidence" value="ECO:0007669"/>
    <property type="project" value="UniProtKB-SubCell"/>
</dbReference>
<dbReference type="GO" id="GO:0062054">
    <property type="term" value="F:fluoride channel activity"/>
    <property type="evidence" value="ECO:0007669"/>
    <property type="project" value="UniProtKB-UniRule"/>
</dbReference>
<dbReference type="GO" id="GO:0046872">
    <property type="term" value="F:metal ion binding"/>
    <property type="evidence" value="ECO:0007669"/>
    <property type="project" value="UniProtKB-KW"/>
</dbReference>
<dbReference type="GO" id="GO:0140114">
    <property type="term" value="P:cellular detoxification of fluoride"/>
    <property type="evidence" value="ECO:0007669"/>
    <property type="project" value="UniProtKB-UniRule"/>
</dbReference>
<dbReference type="HAMAP" id="MF_00454">
    <property type="entry name" value="FluC"/>
    <property type="match status" value="1"/>
</dbReference>
<dbReference type="InterPro" id="IPR003691">
    <property type="entry name" value="FluC"/>
</dbReference>
<dbReference type="Pfam" id="PF02537">
    <property type="entry name" value="CRCB"/>
    <property type="match status" value="1"/>
</dbReference>
<proteinExistence type="inferred from homology"/>
<organism>
    <name type="scientific">Prochlorococcus marinus (strain SARG / CCMP1375 / SS120)</name>
    <dbReference type="NCBI Taxonomy" id="167539"/>
    <lineage>
        <taxon>Bacteria</taxon>
        <taxon>Bacillati</taxon>
        <taxon>Cyanobacteriota</taxon>
        <taxon>Cyanophyceae</taxon>
        <taxon>Synechococcales</taxon>
        <taxon>Prochlorococcaceae</taxon>
        <taxon>Prochlorococcus</taxon>
    </lineage>
</organism>
<accession>Q7V9N6</accession>
<sequence>MHSKLNIQSKQLYKIFLLIVGSILGAILRWKLNNYFWVNISGAALLGLIVGLRAGSRIQFFLVIGFCGSFTTFSGWILDVFDLFRTGFFWKAAGLICSNLLGGFTALSVTFWIGRKIRHLFIPQ</sequence>
<gene>
    <name evidence="1" type="primary">fluC1</name>
    <name evidence="1" type="synonym">crcB1</name>
    <name type="ordered locus">Pro_1793</name>
</gene>
<name>FLUC1_PROMA</name>
<comment type="function">
    <text evidence="1">Fluoride-specific ion channel. Important for reducing fluoride concentration in the cell, thus reducing its toxicity.</text>
</comment>
<comment type="catalytic activity">
    <reaction evidence="1">
        <text>fluoride(in) = fluoride(out)</text>
        <dbReference type="Rhea" id="RHEA:76159"/>
        <dbReference type="ChEBI" id="CHEBI:17051"/>
    </reaction>
    <physiologicalReaction direction="left-to-right" evidence="1">
        <dbReference type="Rhea" id="RHEA:76160"/>
    </physiologicalReaction>
</comment>
<comment type="activity regulation">
    <text evidence="1">Na(+) is not transported, but it plays an essential structural role and its presence is essential for fluoride channel function.</text>
</comment>
<comment type="subcellular location">
    <subcellularLocation>
        <location evidence="1">Cell inner membrane</location>
        <topology evidence="1">Multi-pass membrane protein</topology>
    </subcellularLocation>
</comment>
<comment type="similarity">
    <text evidence="1">Belongs to the fluoride channel Fluc/FEX (TC 1.A.43) family.</text>
</comment>
<protein>
    <recommendedName>
        <fullName evidence="1">Fluoride-specific ion channel FluC 1</fullName>
    </recommendedName>
</protein>
<reference key="1">
    <citation type="journal article" date="2003" name="Proc. Natl. Acad. Sci. U.S.A.">
        <title>Genome sequence of the cyanobacterium Prochlorococcus marinus SS120, a nearly minimal oxyphototrophic genome.</title>
        <authorList>
            <person name="Dufresne A."/>
            <person name="Salanoubat M."/>
            <person name="Partensky F."/>
            <person name="Artiguenave F."/>
            <person name="Axmann I.M."/>
            <person name="Barbe V."/>
            <person name="Duprat S."/>
            <person name="Galperin M.Y."/>
            <person name="Koonin E.V."/>
            <person name="Le Gall F."/>
            <person name="Makarova K.S."/>
            <person name="Ostrowski M."/>
            <person name="Oztas S."/>
            <person name="Robert C."/>
            <person name="Rogozin I.B."/>
            <person name="Scanlan D.J."/>
            <person name="Tandeau de Marsac N."/>
            <person name="Weissenbach J."/>
            <person name="Wincker P."/>
            <person name="Wolf Y.I."/>
            <person name="Hess W.R."/>
        </authorList>
    </citation>
    <scope>NUCLEOTIDE SEQUENCE [LARGE SCALE GENOMIC DNA]</scope>
    <source>
        <strain>SARG / CCMP1375 / SS120</strain>
    </source>
</reference>
<evidence type="ECO:0000255" key="1">
    <source>
        <dbReference type="HAMAP-Rule" id="MF_00454"/>
    </source>
</evidence>
<keyword id="KW-0997">Cell inner membrane</keyword>
<keyword id="KW-1003">Cell membrane</keyword>
<keyword id="KW-0407">Ion channel</keyword>
<keyword id="KW-0406">Ion transport</keyword>
<keyword id="KW-0472">Membrane</keyword>
<keyword id="KW-0479">Metal-binding</keyword>
<keyword id="KW-1185">Reference proteome</keyword>
<keyword id="KW-0915">Sodium</keyword>
<keyword id="KW-0812">Transmembrane</keyword>
<keyword id="KW-1133">Transmembrane helix</keyword>
<keyword id="KW-0813">Transport</keyword>
<feature type="chain" id="PRO_0000110151" description="Fluoride-specific ion channel FluC 1">
    <location>
        <begin position="1"/>
        <end position="124"/>
    </location>
</feature>
<feature type="transmembrane region" description="Helical" evidence="1">
    <location>
        <begin position="7"/>
        <end position="27"/>
    </location>
</feature>
<feature type="transmembrane region" description="Helical" evidence="1">
    <location>
        <begin position="32"/>
        <end position="52"/>
    </location>
</feature>
<feature type="transmembrane region" description="Helical" evidence="1">
    <location>
        <begin position="58"/>
        <end position="78"/>
    </location>
</feature>
<feature type="transmembrane region" description="Helical" evidence="1">
    <location>
        <begin position="93"/>
        <end position="113"/>
    </location>
</feature>
<feature type="binding site" evidence="1">
    <location>
        <position position="68"/>
    </location>
    <ligand>
        <name>Na(+)</name>
        <dbReference type="ChEBI" id="CHEBI:29101"/>
        <note>structural</note>
    </ligand>
</feature>
<feature type="binding site" evidence="1">
    <location>
        <position position="71"/>
    </location>
    <ligand>
        <name>Na(+)</name>
        <dbReference type="ChEBI" id="CHEBI:29101"/>
        <note>structural</note>
    </ligand>
</feature>